<evidence type="ECO:0000250" key="1">
    <source>
        <dbReference type="UniProtKB" id="P17302"/>
    </source>
</evidence>
<evidence type="ECO:0000250" key="2">
    <source>
        <dbReference type="UniProtKB" id="P23242"/>
    </source>
</evidence>
<evidence type="ECO:0000250" key="3">
    <source>
        <dbReference type="UniProtKB" id="Q6TYA7"/>
    </source>
</evidence>
<evidence type="ECO:0000255" key="4"/>
<evidence type="ECO:0000256" key="5">
    <source>
        <dbReference type="SAM" id="MobiDB-lite"/>
    </source>
</evidence>
<evidence type="ECO:0000269" key="6">
    <source>
    </source>
</evidence>
<evidence type="ECO:0000269" key="7">
    <source>
    </source>
</evidence>
<evidence type="ECO:0000269" key="8">
    <source>
    </source>
</evidence>
<evidence type="ECO:0000269" key="9">
    <source>
    </source>
</evidence>
<evidence type="ECO:0000269" key="10">
    <source>
    </source>
</evidence>
<evidence type="ECO:0000269" key="11">
    <source>
    </source>
</evidence>
<evidence type="ECO:0000269" key="12">
    <source>
    </source>
</evidence>
<evidence type="ECO:0000269" key="13">
    <source>
    </source>
</evidence>
<evidence type="ECO:0000269" key="14">
    <source>
    </source>
</evidence>
<evidence type="ECO:0000269" key="15">
    <source>
    </source>
</evidence>
<evidence type="ECO:0000269" key="16">
    <source>
    </source>
</evidence>
<evidence type="ECO:0000269" key="17">
    <source>
    </source>
</evidence>
<evidence type="ECO:0000269" key="18">
    <source>
    </source>
</evidence>
<evidence type="ECO:0000305" key="19"/>
<evidence type="ECO:0000305" key="20">
    <source>
    </source>
</evidence>
<evidence type="ECO:0000305" key="21">
    <source>
    </source>
</evidence>
<evidence type="ECO:0000305" key="22">
    <source>
    </source>
</evidence>
<evidence type="ECO:0007744" key="23">
    <source>
    </source>
</evidence>
<evidence type="ECO:0007829" key="24">
    <source>
        <dbReference type="PDB" id="1R5S"/>
    </source>
</evidence>
<evidence type="ECO:0007829" key="25">
    <source>
        <dbReference type="PDB" id="2N8T"/>
    </source>
</evidence>
<evidence type="ECO:0007829" key="26">
    <source>
        <dbReference type="PDB" id="3CYY"/>
    </source>
</evidence>
<protein>
    <recommendedName>
        <fullName>Gap junction alpha-1 protein</fullName>
    </recommendedName>
    <alternativeName>
        <fullName>Connexin-43</fullName>
        <shortName>Cx43</shortName>
    </alternativeName>
    <alternativeName>
        <fullName>Gap junction 43 kDa heart protein</fullName>
    </alternativeName>
</protein>
<dbReference type="EMBL" id="X06656">
    <property type="protein sequence ID" value="CAA29855.1"/>
    <property type="molecule type" value="mRNA"/>
</dbReference>
<dbReference type="EMBL" id="AY324140">
    <property type="protein sequence ID" value="AAP88589.1"/>
    <property type="molecule type" value="mRNA"/>
</dbReference>
<dbReference type="EMBL" id="BC081842">
    <property type="protein sequence ID" value="AAH81842.1"/>
    <property type="molecule type" value="mRNA"/>
</dbReference>
<dbReference type="PIR" id="A24047">
    <property type="entry name" value="A24047"/>
</dbReference>
<dbReference type="PIR" id="S00532">
    <property type="entry name" value="S00532"/>
</dbReference>
<dbReference type="RefSeq" id="NP_001416356.1">
    <property type="nucleotide sequence ID" value="NM_001429427.1"/>
</dbReference>
<dbReference type="RefSeq" id="NP_001416357.1">
    <property type="nucleotide sequence ID" value="NM_001429428.1"/>
</dbReference>
<dbReference type="RefSeq" id="NP_001416358.1">
    <property type="nucleotide sequence ID" value="NM_001429429.1"/>
</dbReference>
<dbReference type="RefSeq" id="NP_036699.1">
    <property type="nucleotide sequence ID" value="NM_012567.3"/>
</dbReference>
<dbReference type="PDB" id="1R5S">
    <property type="method" value="NMR"/>
    <property type="chains" value="A=255-382"/>
</dbReference>
<dbReference type="PDB" id="2N8T">
    <property type="method" value="NMR"/>
    <property type="chains" value="B=276-289"/>
</dbReference>
<dbReference type="PDB" id="3CYY">
    <property type="method" value="X-ray"/>
    <property type="resolution" value="2.40 A"/>
    <property type="chains" value="C/D=374-382"/>
</dbReference>
<dbReference type="PDBsum" id="1R5S"/>
<dbReference type="PDBsum" id="2N8T"/>
<dbReference type="PDBsum" id="3CYY"/>
<dbReference type="BMRB" id="P08050"/>
<dbReference type="SMR" id="P08050"/>
<dbReference type="BioGRID" id="246562">
    <property type="interactions" value="302"/>
</dbReference>
<dbReference type="CORUM" id="P08050"/>
<dbReference type="DIP" id="DIP-34793N"/>
<dbReference type="FunCoup" id="P08050">
    <property type="interactions" value="586"/>
</dbReference>
<dbReference type="IntAct" id="P08050">
    <property type="interactions" value="20"/>
</dbReference>
<dbReference type="MINT" id="P08050"/>
<dbReference type="STRING" id="10116.ENSRNOP00000001054"/>
<dbReference type="TCDB" id="1.A.24.1.1">
    <property type="family name" value="the gap junction-forming connexin (connexin) family"/>
</dbReference>
<dbReference type="iPTMnet" id="P08050"/>
<dbReference type="PhosphoSitePlus" id="P08050"/>
<dbReference type="SwissPalm" id="P08050"/>
<dbReference type="PaxDb" id="10116-ENSRNOP00000001054"/>
<dbReference type="DNASU" id="24392"/>
<dbReference type="Ensembl" id="ENSRNOT00000100494.1">
    <property type="protein sequence ID" value="ENSRNOP00000093256.1"/>
    <property type="gene ID" value="ENSRNOG00000000805.7"/>
</dbReference>
<dbReference type="GeneID" id="24392"/>
<dbReference type="KEGG" id="rno:24392"/>
<dbReference type="UCSC" id="RGD:2690">
    <property type="organism name" value="rat"/>
</dbReference>
<dbReference type="AGR" id="RGD:2690"/>
<dbReference type="CTD" id="2697"/>
<dbReference type="RGD" id="2690">
    <property type="gene designation" value="Gja1"/>
</dbReference>
<dbReference type="eggNOG" id="ENOG502QRAE">
    <property type="taxonomic scope" value="Eukaryota"/>
</dbReference>
<dbReference type="GeneTree" id="ENSGT01090000260070"/>
<dbReference type="HOGENOM" id="CLU_037388_0_0_1"/>
<dbReference type="InParanoid" id="P08050"/>
<dbReference type="OMA" id="FWVLQFI"/>
<dbReference type="OrthoDB" id="8773830at2759"/>
<dbReference type="PhylomeDB" id="P08050"/>
<dbReference type="TreeFam" id="TF329606"/>
<dbReference type="Reactome" id="R-RNO-190840">
    <property type="pathway name" value="Microtubule-dependent trafficking of connexons from Golgi to the plasma membrane"/>
</dbReference>
<dbReference type="Reactome" id="R-RNO-190861">
    <property type="pathway name" value="Gap junction assembly"/>
</dbReference>
<dbReference type="Reactome" id="R-RNO-190873">
    <property type="pathway name" value="Gap junction degradation"/>
</dbReference>
<dbReference type="Reactome" id="R-RNO-191650">
    <property type="pathway name" value="Regulation of gap junction activity"/>
</dbReference>
<dbReference type="Reactome" id="R-RNO-196025">
    <property type="pathway name" value="Formation of annular gap junctions"/>
</dbReference>
<dbReference type="Reactome" id="R-RNO-9013406">
    <property type="pathway name" value="RHOQ GTPase cycle"/>
</dbReference>
<dbReference type="EvolutionaryTrace" id="P08050"/>
<dbReference type="PRO" id="PR:P08050"/>
<dbReference type="Proteomes" id="UP000002494">
    <property type="component" value="Chromosome 20"/>
</dbReference>
<dbReference type="Bgee" id="ENSRNOG00000000805">
    <property type="expression patterns" value="Expressed in ovary and 20 other cell types or tissues"/>
</dbReference>
<dbReference type="GO" id="GO:0016324">
    <property type="term" value="C:apical plasma membrane"/>
    <property type="evidence" value="ECO:0000250"/>
    <property type="project" value="UniProtKB"/>
</dbReference>
<dbReference type="GO" id="GO:0030054">
    <property type="term" value="C:cell junction"/>
    <property type="evidence" value="ECO:0000266"/>
    <property type="project" value="RGD"/>
</dbReference>
<dbReference type="GO" id="GO:0044291">
    <property type="term" value="C:cell-cell contact zone"/>
    <property type="evidence" value="ECO:0000266"/>
    <property type="project" value="RGD"/>
</dbReference>
<dbReference type="GO" id="GO:0005911">
    <property type="term" value="C:cell-cell junction"/>
    <property type="evidence" value="ECO:0000266"/>
    <property type="project" value="RGD"/>
</dbReference>
<dbReference type="GO" id="GO:0005922">
    <property type="term" value="C:connexin complex"/>
    <property type="evidence" value="ECO:0000314"/>
    <property type="project" value="UniProtKB"/>
</dbReference>
<dbReference type="GO" id="GO:0043292">
    <property type="term" value="C:contractile muscle fiber"/>
    <property type="evidence" value="ECO:0000266"/>
    <property type="project" value="RGD"/>
</dbReference>
<dbReference type="GO" id="GO:0005737">
    <property type="term" value="C:cytoplasm"/>
    <property type="evidence" value="ECO:0000266"/>
    <property type="project" value="RGD"/>
</dbReference>
<dbReference type="GO" id="GO:0005829">
    <property type="term" value="C:cytosol"/>
    <property type="evidence" value="ECO:0000266"/>
    <property type="project" value="RGD"/>
</dbReference>
<dbReference type="GO" id="GO:0005769">
    <property type="term" value="C:early endosome"/>
    <property type="evidence" value="ECO:0000314"/>
    <property type="project" value="RGD"/>
</dbReference>
<dbReference type="GO" id="GO:0005789">
    <property type="term" value="C:endoplasmic reticulum membrane"/>
    <property type="evidence" value="ECO:0000304"/>
    <property type="project" value="Reactome"/>
</dbReference>
<dbReference type="GO" id="GO:0005768">
    <property type="term" value="C:endosome"/>
    <property type="evidence" value="ECO:0000314"/>
    <property type="project" value="RGD"/>
</dbReference>
<dbReference type="GO" id="GO:0005916">
    <property type="term" value="C:fascia adherens"/>
    <property type="evidence" value="ECO:0000314"/>
    <property type="project" value="RGD"/>
</dbReference>
<dbReference type="GO" id="GO:0005921">
    <property type="term" value="C:gap junction"/>
    <property type="evidence" value="ECO:0000314"/>
    <property type="project" value="UniProtKB"/>
</dbReference>
<dbReference type="GO" id="GO:0005794">
    <property type="term" value="C:Golgi apparatus"/>
    <property type="evidence" value="ECO:0000314"/>
    <property type="project" value="BHF-UCL"/>
</dbReference>
<dbReference type="GO" id="GO:0000139">
    <property type="term" value="C:Golgi membrane"/>
    <property type="evidence" value="ECO:0000304"/>
    <property type="project" value="Reactome"/>
</dbReference>
<dbReference type="GO" id="GO:0030660">
    <property type="term" value="C:Golgi-associated vesicle membrane"/>
    <property type="evidence" value="ECO:0000304"/>
    <property type="project" value="Reactome"/>
</dbReference>
<dbReference type="GO" id="GO:0014704">
    <property type="term" value="C:intercalated disc"/>
    <property type="evidence" value="ECO:0000314"/>
    <property type="project" value="RGD"/>
</dbReference>
<dbReference type="GO" id="GO:0005882">
    <property type="term" value="C:intermediate filament"/>
    <property type="evidence" value="ECO:0000266"/>
    <property type="project" value="RGD"/>
</dbReference>
<dbReference type="GO" id="GO:0005770">
    <property type="term" value="C:late endosome"/>
    <property type="evidence" value="ECO:0000314"/>
    <property type="project" value="RGD"/>
</dbReference>
<dbReference type="GO" id="GO:0016328">
    <property type="term" value="C:lateral plasma membrane"/>
    <property type="evidence" value="ECO:0000266"/>
    <property type="project" value="RGD"/>
</dbReference>
<dbReference type="GO" id="GO:0005764">
    <property type="term" value="C:lysosome"/>
    <property type="evidence" value="ECO:0000266"/>
    <property type="project" value="RGD"/>
</dbReference>
<dbReference type="GO" id="GO:0016020">
    <property type="term" value="C:membrane"/>
    <property type="evidence" value="ECO:0000314"/>
    <property type="project" value="MGI"/>
</dbReference>
<dbReference type="GO" id="GO:0045121">
    <property type="term" value="C:membrane raft"/>
    <property type="evidence" value="ECO:0000314"/>
    <property type="project" value="BHF-UCL"/>
</dbReference>
<dbReference type="GO" id="GO:0005741">
    <property type="term" value="C:mitochondrial outer membrane"/>
    <property type="evidence" value="ECO:0000314"/>
    <property type="project" value="RGD"/>
</dbReference>
<dbReference type="GO" id="GO:0005739">
    <property type="term" value="C:mitochondrion"/>
    <property type="evidence" value="ECO:0000266"/>
    <property type="project" value="RGD"/>
</dbReference>
<dbReference type="GO" id="GO:0005771">
    <property type="term" value="C:multivesicular body"/>
    <property type="evidence" value="ECO:0000314"/>
    <property type="project" value="RGD"/>
</dbReference>
<dbReference type="GO" id="GO:0005634">
    <property type="term" value="C:nucleus"/>
    <property type="evidence" value="ECO:0000266"/>
    <property type="project" value="RGD"/>
</dbReference>
<dbReference type="GO" id="GO:0005886">
    <property type="term" value="C:plasma membrane"/>
    <property type="evidence" value="ECO:0000314"/>
    <property type="project" value="BHF-UCL"/>
</dbReference>
<dbReference type="GO" id="GO:0032991">
    <property type="term" value="C:protein-containing complex"/>
    <property type="evidence" value="ECO:0000315"/>
    <property type="project" value="CAFA"/>
</dbReference>
<dbReference type="GO" id="GO:0070160">
    <property type="term" value="C:tight junction"/>
    <property type="evidence" value="ECO:0000266"/>
    <property type="project" value="RGD"/>
</dbReference>
<dbReference type="GO" id="GO:0008013">
    <property type="term" value="F:beta-catenin binding"/>
    <property type="evidence" value="ECO:0000266"/>
    <property type="project" value="RGD"/>
</dbReference>
<dbReference type="GO" id="GO:0048487">
    <property type="term" value="F:beta-tubulin binding"/>
    <property type="evidence" value="ECO:0000266"/>
    <property type="project" value="RGD"/>
</dbReference>
<dbReference type="GO" id="GO:0015267">
    <property type="term" value="F:channel activity"/>
    <property type="evidence" value="ECO:0000304"/>
    <property type="project" value="Reactome"/>
</dbReference>
<dbReference type="GO" id="GO:0071253">
    <property type="term" value="F:connexin binding"/>
    <property type="evidence" value="ECO:0000353"/>
    <property type="project" value="RGD"/>
</dbReference>
<dbReference type="GO" id="GO:0097718">
    <property type="term" value="F:disordered domain specific binding"/>
    <property type="evidence" value="ECO:0000353"/>
    <property type="project" value="CAFA"/>
</dbReference>
<dbReference type="GO" id="GO:0015562">
    <property type="term" value="F:efflux transmembrane transporter activity"/>
    <property type="evidence" value="ECO:0000266"/>
    <property type="project" value="RGD"/>
</dbReference>
<dbReference type="GO" id="GO:0005243">
    <property type="term" value="F:gap junction channel activity"/>
    <property type="evidence" value="ECO:0000314"/>
    <property type="project" value="CAFA"/>
</dbReference>
<dbReference type="GO" id="GO:1903763">
    <property type="term" value="F:gap junction channel activity involved in cell communication by electrical coupling"/>
    <property type="evidence" value="ECO:0000266"/>
    <property type="project" value="RGD"/>
</dbReference>
<dbReference type="GO" id="GO:0055077">
    <property type="term" value="F:gap junction hemi-channel activity"/>
    <property type="evidence" value="ECO:0000250"/>
    <property type="project" value="UniProtKB"/>
</dbReference>
<dbReference type="GO" id="GO:0034634">
    <property type="term" value="F:glutathione transmembrane transporter activity"/>
    <property type="evidence" value="ECO:0000266"/>
    <property type="project" value="RGD"/>
</dbReference>
<dbReference type="GO" id="GO:0015075">
    <property type="term" value="F:monoatomic ion transmembrane transporter activity"/>
    <property type="evidence" value="ECO:0000266"/>
    <property type="project" value="RGD"/>
</dbReference>
<dbReference type="GO" id="GO:0030165">
    <property type="term" value="F:PDZ domain binding"/>
    <property type="evidence" value="ECO:0000353"/>
    <property type="project" value="CAFA"/>
</dbReference>
<dbReference type="GO" id="GO:0019904">
    <property type="term" value="F:protein domain specific binding"/>
    <property type="evidence" value="ECO:0000314"/>
    <property type="project" value="RGD"/>
</dbReference>
<dbReference type="GO" id="GO:1990782">
    <property type="term" value="F:protein tyrosine kinase binding"/>
    <property type="evidence" value="ECO:0000266"/>
    <property type="project" value="RGD"/>
</dbReference>
<dbReference type="GO" id="GO:0097110">
    <property type="term" value="F:scaffold protein binding"/>
    <property type="evidence" value="ECO:0000266"/>
    <property type="project" value="RGD"/>
</dbReference>
<dbReference type="GO" id="GO:0017124">
    <property type="term" value="F:SH3 domain binding"/>
    <property type="evidence" value="ECO:0000314"/>
    <property type="project" value="RGD"/>
</dbReference>
<dbReference type="GO" id="GO:0005102">
    <property type="term" value="F:signaling receptor binding"/>
    <property type="evidence" value="ECO:0000266"/>
    <property type="project" value="RGD"/>
</dbReference>
<dbReference type="GO" id="GO:0015631">
    <property type="term" value="F:tubulin binding"/>
    <property type="evidence" value="ECO:0000250"/>
    <property type="project" value="UniProtKB"/>
</dbReference>
<dbReference type="GO" id="GO:0007512">
    <property type="term" value="P:adult heart development"/>
    <property type="evidence" value="ECO:0000266"/>
    <property type="project" value="RGD"/>
</dbReference>
<dbReference type="GO" id="GO:0015867">
    <property type="term" value="P:ATP transport"/>
    <property type="evidence" value="ECO:0000315"/>
    <property type="project" value="RGD"/>
</dbReference>
<dbReference type="GO" id="GO:0003294">
    <property type="term" value="P:atrial ventricular junction remodeling"/>
    <property type="evidence" value="ECO:0000266"/>
    <property type="project" value="RGD"/>
</dbReference>
<dbReference type="GO" id="GO:0048514">
    <property type="term" value="P:blood vessel morphogenesis"/>
    <property type="evidence" value="ECO:0000266"/>
    <property type="project" value="RGD"/>
</dbReference>
<dbReference type="GO" id="GO:0060348">
    <property type="term" value="P:bone development"/>
    <property type="evidence" value="ECO:0000250"/>
    <property type="project" value="UniProtKB"/>
</dbReference>
<dbReference type="GO" id="GO:0046849">
    <property type="term" value="P:bone remodeling"/>
    <property type="evidence" value="ECO:0000250"/>
    <property type="project" value="UniProtKB"/>
</dbReference>
<dbReference type="GO" id="GO:0061337">
    <property type="term" value="P:cardiac conduction"/>
    <property type="evidence" value="ECO:0000266"/>
    <property type="project" value="RGD"/>
</dbReference>
<dbReference type="GO" id="GO:0010643">
    <property type="term" value="P:cell communication by chemical coupling"/>
    <property type="evidence" value="ECO:0000266"/>
    <property type="project" value="RGD"/>
</dbReference>
<dbReference type="GO" id="GO:0010644">
    <property type="term" value="P:cell communication by electrical coupling"/>
    <property type="evidence" value="ECO:0000266"/>
    <property type="project" value="RGD"/>
</dbReference>
<dbReference type="GO" id="GO:0045216">
    <property type="term" value="P:cell-cell junction organization"/>
    <property type="evidence" value="ECO:0000266"/>
    <property type="project" value="RGD"/>
</dbReference>
<dbReference type="GO" id="GO:0007267">
    <property type="term" value="P:cell-cell signaling"/>
    <property type="evidence" value="ECO:0000314"/>
    <property type="project" value="RGD"/>
</dbReference>
<dbReference type="GO" id="GO:1904646">
    <property type="term" value="P:cellular response to amyloid-beta"/>
    <property type="evidence" value="ECO:0000266"/>
    <property type="project" value="RGD"/>
</dbReference>
<dbReference type="GO" id="GO:0071260">
    <property type="term" value="P:cellular response to mechanical stimulus"/>
    <property type="evidence" value="ECO:0000270"/>
    <property type="project" value="RGD"/>
</dbReference>
<dbReference type="GO" id="GO:0071374">
    <property type="term" value="P:cellular response to parathyroid hormone stimulus"/>
    <property type="evidence" value="ECO:0000270"/>
    <property type="project" value="RGD"/>
</dbReference>
<dbReference type="GO" id="GO:0071467">
    <property type="term" value="P:cellular response to pH"/>
    <property type="evidence" value="ECO:0000266"/>
    <property type="project" value="RGD"/>
</dbReference>
<dbReference type="GO" id="GO:0036120">
    <property type="term" value="P:cellular response to platelet-derived growth factor stimulus"/>
    <property type="evidence" value="ECO:0000266"/>
    <property type="project" value="RGD"/>
</dbReference>
<dbReference type="GO" id="GO:0002544">
    <property type="term" value="P:chronic inflammatory response"/>
    <property type="evidence" value="ECO:0000315"/>
    <property type="project" value="RGD"/>
</dbReference>
<dbReference type="GO" id="GO:0002069">
    <property type="term" value="P:columnar/cuboidal epithelial cell maturation"/>
    <property type="evidence" value="ECO:0000266"/>
    <property type="project" value="RGD"/>
</dbReference>
<dbReference type="GO" id="GO:0046697">
    <property type="term" value="P:decidualization"/>
    <property type="evidence" value="ECO:0000270"/>
    <property type="project" value="RGD"/>
</dbReference>
<dbReference type="GO" id="GO:0042733">
    <property type="term" value="P:embryonic digit morphogenesis"/>
    <property type="evidence" value="ECO:0000266"/>
    <property type="project" value="RGD"/>
</dbReference>
<dbReference type="GO" id="GO:0035050">
    <property type="term" value="P:embryonic heart tube development"/>
    <property type="evidence" value="ECO:0000266"/>
    <property type="project" value="RGD"/>
</dbReference>
<dbReference type="GO" id="GO:0003158">
    <property type="term" value="P:endothelium development"/>
    <property type="evidence" value="ECO:0000270"/>
    <property type="project" value="RGD"/>
</dbReference>
<dbReference type="GO" id="GO:1905867">
    <property type="term" value="P:epididymis development"/>
    <property type="evidence" value="ECO:0000270"/>
    <property type="project" value="RGD"/>
</dbReference>
<dbReference type="GO" id="GO:0000132">
    <property type="term" value="P:establishment of mitotic spindle orientation"/>
    <property type="evidence" value="ECO:0000266"/>
    <property type="project" value="RGD"/>
</dbReference>
<dbReference type="GO" id="GO:0140115">
    <property type="term" value="P:export across plasma membrane"/>
    <property type="evidence" value="ECO:0000266"/>
    <property type="project" value="RGD"/>
</dbReference>
<dbReference type="GO" id="GO:0016264">
    <property type="term" value="P:gap junction assembly"/>
    <property type="evidence" value="ECO:0000304"/>
    <property type="project" value="UniProtKB"/>
</dbReference>
<dbReference type="GO" id="GO:0014047">
    <property type="term" value="P:glutamate secretion"/>
    <property type="evidence" value="ECO:0000266"/>
    <property type="project" value="RGD"/>
</dbReference>
<dbReference type="GO" id="GO:0007507">
    <property type="term" value="P:heart development"/>
    <property type="evidence" value="ECO:0000270"/>
    <property type="project" value="RGD"/>
</dbReference>
<dbReference type="GO" id="GO:0001947">
    <property type="term" value="P:heart looping"/>
    <property type="evidence" value="ECO:0000266"/>
    <property type="project" value="RGD"/>
</dbReference>
<dbReference type="GO" id="GO:0001701">
    <property type="term" value="P:in utero embryonic development"/>
    <property type="evidence" value="ECO:0000266"/>
    <property type="project" value="RGD"/>
</dbReference>
<dbReference type="GO" id="GO:0002088">
    <property type="term" value="P:lens development in camera-type eye"/>
    <property type="evidence" value="ECO:0000266"/>
    <property type="project" value="RGD"/>
</dbReference>
<dbReference type="GO" id="GO:0035437">
    <property type="term" value="P:maintenance of protein localization in endoplasmic reticulum"/>
    <property type="evidence" value="ECO:0000314"/>
    <property type="project" value="RGD"/>
</dbReference>
<dbReference type="GO" id="GO:0008584">
    <property type="term" value="P:male gonad development"/>
    <property type="evidence" value="ECO:0000266"/>
    <property type="project" value="RGD"/>
</dbReference>
<dbReference type="GO" id="GO:0099111">
    <property type="term" value="P:microtubule-based transport"/>
    <property type="evidence" value="ECO:0000250"/>
    <property type="project" value="UniProtKB"/>
</dbReference>
<dbReference type="GO" id="GO:0060156">
    <property type="term" value="P:milk ejection reflex"/>
    <property type="evidence" value="ECO:0000266"/>
    <property type="project" value="RGD"/>
</dbReference>
<dbReference type="GO" id="GO:0034220">
    <property type="term" value="P:monoatomic ion transmembrane transport"/>
    <property type="evidence" value="ECO:0000266"/>
    <property type="project" value="RGD"/>
</dbReference>
<dbReference type="GO" id="GO:0060044">
    <property type="term" value="P:negative regulation of cardiac muscle cell proliferation"/>
    <property type="evidence" value="ECO:0000315"/>
    <property type="project" value="RGD"/>
</dbReference>
<dbReference type="GO" id="GO:0030308">
    <property type="term" value="P:negative regulation of cell growth"/>
    <property type="evidence" value="ECO:0000315"/>
    <property type="project" value="UniProtKB"/>
</dbReference>
<dbReference type="GO" id="GO:0008285">
    <property type="term" value="P:negative regulation of cell population proliferation"/>
    <property type="evidence" value="ECO:0000314"/>
    <property type="project" value="RGD"/>
</dbReference>
<dbReference type="GO" id="GO:2000279">
    <property type="term" value="P:negative regulation of DNA biosynthetic process"/>
    <property type="evidence" value="ECO:0000314"/>
    <property type="project" value="RGD"/>
</dbReference>
<dbReference type="GO" id="GO:0001937">
    <property type="term" value="P:negative regulation of endothelial cell proliferation"/>
    <property type="evidence" value="ECO:0000315"/>
    <property type="project" value="RGD"/>
</dbReference>
<dbReference type="GO" id="GO:0010629">
    <property type="term" value="P:negative regulation of gene expression"/>
    <property type="evidence" value="ECO:0000266"/>
    <property type="project" value="RGD"/>
</dbReference>
<dbReference type="GO" id="GO:0032277">
    <property type="term" value="P:negative regulation of gonadotropin secretion"/>
    <property type="evidence" value="ECO:0000266"/>
    <property type="project" value="RGD"/>
</dbReference>
<dbReference type="GO" id="GO:1901164">
    <property type="term" value="P:negative regulation of trophoblast cell migration"/>
    <property type="evidence" value="ECO:0000266"/>
    <property type="project" value="RGD"/>
</dbReference>
<dbReference type="GO" id="GO:0097402">
    <property type="term" value="P:neuroblast migration"/>
    <property type="evidence" value="ECO:0000266"/>
    <property type="project" value="RGD"/>
</dbReference>
<dbReference type="GO" id="GO:0001764">
    <property type="term" value="P:neuron migration"/>
    <property type="evidence" value="ECO:0000266"/>
    <property type="project" value="RGD"/>
</dbReference>
<dbReference type="GO" id="GO:0048812">
    <property type="term" value="P:neuron projection morphogenesis"/>
    <property type="evidence" value="ECO:0000315"/>
    <property type="project" value="RGD"/>
</dbReference>
<dbReference type="GO" id="GO:0001649">
    <property type="term" value="P:osteoblast differentiation"/>
    <property type="evidence" value="ECO:0000266"/>
    <property type="project" value="RGD"/>
</dbReference>
<dbReference type="GO" id="GO:2000987">
    <property type="term" value="P:positive regulation of behavioral fear response"/>
    <property type="evidence" value="ECO:0000315"/>
    <property type="project" value="RGD"/>
</dbReference>
<dbReference type="GO" id="GO:0010652">
    <property type="term" value="P:positive regulation of cell communication by chemical coupling"/>
    <property type="evidence" value="ECO:0000315"/>
    <property type="project" value="RGD"/>
</dbReference>
<dbReference type="GO" id="GO:0120162">
    <property type="term" value="P:positive regulation of cold-induced thermogenesis"/>
    <property type="evidence" value="ECO:0000250"/>
    <property type="project" value="YuBioLab"/>
</dbReference>
<dbReference type="GO" id="GO:0007204">
    <property type="term" value="P:positive regulation of cytosolic calcium ion concentration"/>
    <property type="evidence" value="ECO:0000315"/>
    <property type="project" value="RGD"/>
</dbReference>
<dbReference type="GO" id="GO:1904446">
    <property type="term" value="P:positive regulation of establishment of Sertoli cell barrier"/>
    <property type="evidence" value="ECO:0000315"/>
    <property type="project" value="RGD"/>
</dbReference>
<dbReference type="GO" id="GO:0010628">
    <property type="term" value="P:positive regulation of gene expression"/>
    <property type="evidence" value="ECO:0000266"/>
    <property type="project" value="RGD"/>
</dbReference>
<dbReference type="GO" id="GO:0003104">
    <property type="term" value="P:positive regulation of glomerular filtration"/>
    <property type="evidence" value="ECO:0000315"/>
    <property type="project" value="RGD"/>
</dbReference>
<dbReference type="GO" id="GO:0032024">
    <property type="term" value="P:positive regulation of insulin secretion"/>
    <property type="evidence" value="ECO:0000315"/>
    <property type="project" value="RGD"/>
</dbReference>
<dbReference type="GO" id="GO:0045836">
    <property type="term" value="P:positive regulation of meiotic nuclear division"/>
    <property type="evidence" value="ECO:0000315"/>
    <property type="project" value="RGD"/>
</dbReference>
<dbReference type="GO" id="GO:1905772">
    <property type="term" value="P:positive regulation of mesodermal cell differentiation"/>
    <property type="evidence" value="ECO:0000266"/>
    <property type="project" value="RGD"/>
</dbReference>
<dbReference type="GO" id="GO:1905332">
    <property type="term" value="P:positive regulation of morphogenesis of an epithelium"/>
    <property type="evidence" value="ECO:0000266"/>
    <property type="project" value="RGD"/>
</dbReference>
<dbReference type="GO" id="GO:0045732">
    <property type="term" value="P:positive regulation of protein catabolic process"/>
    <property type="evidence" value="ECO:0000314"/>
    <property type="project" value="RGD"/>
</dbReference>
<dbReference type="GO" id="GO:0071673">
    <property type="term" value="P:positive regulation of smooth muscle cell chemotaxis"/>
    <property type="evidence" value="ECO:0000266"/>
    <property type="project" value="RGD"/>
</dbReference>
<dbReference type="GO" id="GO:2000648">
    <property type="term" value="P:positive regulation of stem cell proliferation"/>
    <property type="evidence" value="ECO:0000266"/>
    <property type="project" value="RGD"/>
</dbReference>
<dbReference type="GO" id="GO:0045844">
    <property type="term" value="P:positive regulation of striated muscle tissue development"/>
    <property type="evidence" value="ECO:0000266"/>
    <property type="project" value="RGD"/>
</dbReference>
<dbReference type="GO" id="GO:1904707">
    <property type="term" value="P:positive regulation of vascular associated smooth muscle cell proliferation"/>
    <property type="evidence" value="ECO:0000266"/>
    <property type="project" value="RGD"/>
</dbReference>
<dbReference type="GO" id="GO:0045907">
    <property type="term" value="P:positive regulation of vasoconstriction"/>
    <property type="evidence" value="ECO:0000315"/>
    <property type="project" value="RGD"/>
</dbReference>
<dbReference type="GO" id="GO:0008104">
    <property type="term" value="P:protein localization"/>
    <property type="evidence" value="ECO:0000266"/>
    <property type="project" value="RGD"/>
</dbReference>
<dbReference type="GO" id="GO:0110053">
    <property type="term" value="P:regulation of actin filament organization"/>
    <property type="evidence" value="ECO:0000315"/>
    <property type="project" value="RGD"/>
</dbReference>
<dbReference type="GO" id="GO:0042981">
    <property type="term" value="P:regulation of apoptotic process"/>
    <property type="evidence" value="ECO:0000315"/>
    <property type="project" value="UniProtKB"/>
</dbReference>
<dbReference type="GO" id="GO:0060371">
    <property type="term" value="P:regulation of atrial cardiac muscle cell membrane depolarization"/>
    <property type="evidence" value="ECO:0000266"/>
    <property type="project" value="RGD"/>
</dbReference>
<dbReference type="GO" id="GO:2000810">
    <property type="term" value="P:regulation of bicellular tight junction assembly"/>
    <property type="evidence" value="ECO:0000315"/>
    <property type="project" value="RGD"/>
</dbReference>
<dbReference type="GO" id="GO:0030500">
    <property type="term" value="P:regulation of bone mineralization"/>
    <property type="evidence" value="ECO:0000266"/>
    <property type="project" value="RGD"/>
</dbReference>
<dbReference type="GO" id="GO:0046850">
    <property type="term" value="P:regulation of bone remodeling"/>
    <property type="evidence" value="ECO:0000266"/>
    <property type="project" value="RGD"/>
</dbReference>
<dbReference type="GO" id="GO:0051924">
    <property type="term" value="P:regulation of calcium ion transport"/>
    <property type="evidence" value="ECO:0000315"/>
    <property type="project" value="RGD"/>
</dbReference>
<dbReference type="GO" id="GO:0010649">
    <property type="term" value="P:regulation of cell communication by electrical coupling"/>
    <property type="evidence" value="ECO:0000314"/>
    <property type="project" value="RGD"/>
</dbReference>
<dbReference type="GO" id="GO:0008016">
    <property type="term" value="P:regulation of heart contraction"/>
    <property type="evidence" value="ECO:0000266"/>
    <property type="project" value="RGD"/>
</dbReference>
<dbReference type="GO" id="GO:0022898">
    <property type="term" value="P:regulation of transmembrane transporter activity"/>
    <property type="evidence" value="ECO:0000315"/>
    <property type="project" value="CAFA"/>
</dbReference>
<dbReference type="GO" id="GO:0060373">
    <property type="term" value="P:regulation of ventricular cardiac muscle cell membrane depolarization"/>
    <property type="evidence" value="ECO:0000266"/>
    <property type="project" value="RGD"/>
</dbReference>
<dbReference type="GO" id="GO:0060307">
    <property type="term" value="P:regulation of ventricular cardiac muscle cell membrane repolarization"/>
    <property type="evidence" value="ECO:0000266"/>
    <property type="project" value="RGD"/>
</dbReference>
<dbReference type="GO" id="GO:0032355">
    <property type="term" value="P:response to estradiol"/>
    <property type="evidence" value="ECO:0000270"/>
    <property type="project" value="RGD"/>
</dbReference>
<dbReference type="GO" id="GO:0034405">
    <property type="term" value="P:response to fluid shear stress"/>
    <property type="evidence" value="ECO:0000270"/>
    <property type="project" value="RGD"/>
</dbReference>
<dbReference type="GO" id="GO:0009749">
    <property type="term" value="P:response to glucose"/>
    <property type="evidence" value="ECO:0000270"/>
    <property type="project" value="RGD"/>
</dbReference>
<dbReference type="GO" id="GO:0002931">
    <property type="term" value="P:response to ischemia"/>
    <property type="evidence" value="ECO:0000270"/>
    <property type="project" value="RGD"/>
</dbReference>
<dbReference type="GO" id="GO:0032496">
    <property type="term" value="P:response to lipopolysaccharide"/>
    <property type="evidence" value="ECO:0000270"/>
    <property type="project" value="RGD"/>
</dbReference>
<dbReference type="GO" id="GO:0043434">
    <property type="term" value="P:response to peptide hormone"/>
    <property type="evidence" value="ECO:0000270"/>
    <property type="project" value="RGD"/>
</dbReference>
<dbReference type="GO" id="GO:0009268">
    <property type="term" value="P:response to pH"/>
    <property type="evidence" value="ECO:0000314"/>
    <property type="project" value="RGD"/>
</dbReference>
<dbReference type="GO" id="GO:0032526">
    <property type="term" value="P:response to retinoic acid"/>
    <property type="evidence" value="ECO:0000270"/>
    <property type="project" value="RGD"/>
</dbReference>
<dbReference type="GO" id="GO:0009611">
    <property type="term" value="P:response to wounding"/>
    <property type="evidence" value="ECO:0000266"/>
    <property type="project" value="RGD"/>
</dbReference>
<dbReference type="GO" id="GO:0007165">
    <property type="term" value="P:signal transduction"/>
    <property type="evidence" value="ECO:0000266"/>
    <property type="project" value="RGD"/>
</dbReference>
<dbReference type="GO" id="GO:0043403">
    <property type="term" value="P:skeletal muscle tissue regeneration"/>
    <property type="evidence" value="ECO:0000266"/>
    <property type="project" value="RGD"/>
</dbReference>
<dbReference type="GO" id="GO:0007283">
    <property type="term" value="P:spermatogenesis"/>
    <property type="evidence" value="ECO:0000315"/>
    <property type="project" value="RGD"/>
</dbReference>
<dbReference type="GO" id="GO:0042110">
    <property type="term" value="P:T cell activation"/>
    <property type="evidence" value="ECO:0000266"/>
    <property type="project" value="RGD"/>
</dbReference>
<dbReference type="GO" id="GO:0042098">
    <property type="term" value="P:T cell proliferation"/>
    <property type="evidence" value="ECO:0000266"/>
    <property type="project" value="RGD"/>
</dbReference>
<dbReference type="GO" id="GO:0055085">
    <property type="term" value="P:transmembrane transport"/>
    <property type="evidence" value="ECO:0000314"/>
    <property type="project" value="CAFA"/>
</dbReference>
<dbReference type="GO" id="GO:0010232">
    <property type="term" value="P:vascular transport"/>
    <property type="evidence" value="ECO:0000315"/>
    <property type="project" value="RGD"/>
</dbReference>
<dbReference type="GO" id="GO:0042311">
    <property type="term" value="P:vasodilation"/>
    <property type="evidence" value="ECO:0000315"/>
    <property type="project" value="RGD"/>
</dbReference>
<dbReference type="GO" id="GO:0042908">
    <property type="term" value="P:xenobiotic transport"/>
    <property type="evidence" value="ECO:0000266"/>
    <property type="project" value="RGD"/>
</dbReference>
<dbReference type="DisProt" id="DP00278"/>
<dbReference type="FunFam" id="1.20.1440.80:FF:000001">
    <property type="entry name" value="Gap junction alpha-1"/>
    <property type="match status" value="1"/>
</dbReference>
<dbReference type="FunFam" id="1.20.5.1130:FF:000001">
    <property type="entry name" value="Gap junction alpha-1"/>
    <property type="match status" value="1"/>
</dbReference>
<dbReference type="Gene3D" id="1.20.5.1130">
    <property type="entry name" value="Connexin43"/>
    <property type="match status" value="1"/>
</dbReference>
<dbReference type="Gene3D" id="1.20.1440.80">
    <property type="entry name" value="Gap junction channel protein cysteine-rich domain"/>
    <property type="match status" value="1"/>
</dbReference>
<dbReference type="InterPro" id="IPR035091">
    <property type="entry name" value="Alpha_helix_dom_sf"/>
</dbReference>
<dbReference type="InterPro" id="IPR000500">
    <property type="entry name" value="Connexin"/>
</dbReference>
<dbReference type="InterPro" id="IPR002261">
    <property type="entry name" value="Connexin43"/>
</dbReference>
<dbReference type="InterPro" id="IPR013124">
    <property type="entry name" value="Connexin43_C"/>
</dbReference>
<dbReference type="InterPro" id="IPR034634">
    <property type="entry name" value="Connexin_C"/>
</dbReference>
<dbReference type="InterPro" id="IPR019570">
    <property type="entry name" value="Connexin_CCC"/>
</dbReference>
<dbReference type="InterPro" id="IPR017990">
    <property type="entry name" value="Connexin_CS"/>
</dbReference>
<dbReference type="InterPro" id="IPR013092">
    <property type="entry name" value="Connexin_N"/>
</dbReference>
<dbReference type="InterPro" id="IPR038359">
    <property type="entry name" value="Connexin_N_sf"/>
</dbReference>
<dbReference type="PANTHER" id="PTHR11984">
    <property type="entry name" value="CONNEXIN"/>
    <property type="match status" value="1"/>
</dbReference>
<dbReference type="PANTHER" id="PTHR11984:SF33">
    <property type="entry name" value="GAP JUNCTION ALPHA-1 PROTEIN"/>
    <property type="match status" value="1"/>
</dbReference>
<dbReference type="Pfam" id="PF00029">
    <property type="entry name" value="Connexin"/>
    <property type="match status" value="1"/>
</dbReference>
<dbReference type="Pfam" id="PF03508">
    <property type="entry name" value="Connexin43"/>
    <property type="match status" value="1"/>
</dbReference>
<dbReference type="PRINTS" id="PR00206">
    <property type="entry name" value="CONNEXIN"/>
</dbReference>
<dbReference type="PRINTS" id="PR01132">
    <property type="entry name" value="CONNEXINA1"/>
</dbReference>
<dbReference type="SMART" id="SM00037">
    <property type="entry name" value="CNX"/>
    <property type="match status" value="1"/>
</dbReference>
<dbReference type="SMART" id="SM01089">
    <property type="entry name" value="Connexin_CCC"/>
    <property type="match status" value="1"/>
</dbReference>
<dbReference type="SUPFAM" id="SSF118220">
    <property type="entry name" value="Connexin43"/>
    <property type="match status" value="1"/>
</dbReference>
<dbReference type="PROSITE" id="PS00407">
    <property type="entry name" value="CONNEXINS_1"/>
    <property type="match status" value="1"/>
</dbReference>
<dbReference type="PROSITE" id="PS00408">
    <property type="entry name" value="CONNEXINS_2"/>
    <property type="match status" value="1"/>
</dbReference>
<accession>P08050</accession>
<accession>Q53ZE1</accession>
<reference key="1">
    <citation type="journal article" date="1987" name="J. Cell Biol.">
        <title>Connexin43: a protein from rat heart homologous to a gap junction protein from liver.</title>
        <authorList>
            <person name="Beyer E.C."/>
            <person name="Paul D.L."/>
            <person name="Goodenough D.A."/>
        </authorList>
    </citation>
    <scope>NUCLEOTIDE SEQUENCE [MRNA]</scope>
</reference>
<reference key="2">
    <citation type="journal article" date="1991" name="Am. J. Physiol.">
        <title>Molecular cloning of a rat uterine gap junction protein and analysis of gene expression during gestation.</title>
        <authorList>
            <person name="Lang L.M."/>
            <person name="Beyer E.C."/>
            <person name="Schwartz A.L."/>
            <person name="Gitlin J.D."/>
        </authorList>
    </citation>
    <scope>NUCLEOTIDE SEQUENCE [MRNA]</scope>
    <source>
        <tissue>Uterus</tissue>
    </source>
</reference>
<reference key="3">
    <citation type="submission" date="2003-06" db="EMBL/GenBank/DDBJ databases">
        <authorList>
            <person name="Ma L.X."/>
            <person name="Peng Y.W."/>
        </authorList>
    </citation>
    <scope>NUCLEOTIDE SEQUENCE [MRNA]</scope>
    <source>
        <strain>Sprague-Dawley</strain>
    </source>
</reference>
<reference key="4">
    <citation type="journal article" date="2004" name="Genome Res.">
        <title>The status, quality, and expansion of the NIH full-length cDNA project: the Mammalian Gene Collection (MGC).</title>
        <authorList>
            <consortium name="The MGC Project Team"/>
        </authorList>
    </citation>
    <scope>NUCLEOTIDE SEQUENCE [LARGE SCALE MRNA]</scope>
    <source>
        <tissue>Heart</tissue>
    </source>
</reference>
<reference key="5">
    <citation type="journal article" date="1985" name="J. Biol. Chem.">
        <title>The Mr 28,000 gap junction proteins from rat heart and liver are different but related.</title>
        <authorList>
            <person name="Nicholson B.J."/>
            <person name="Gros D.B."/>
            <person name="Kent S.B.H."/>
            <person name="Hood L.E."/>
            <person name="Revel J.-P."/>
        </authorList>
    </citation>
    <scope>PROTEIN SEQUENCE OF 2-33</scope>
    <source>
        <tissue>Heart</tissue>
    </source>
</reference>
<reference key="6">
    <citation type="journal article" date="1991" name="Eur. J. Biochem.">
        <title>Affinity purification of a rat-brain junctional protein, connexin 43.</title>
        <authorList>
            <person name="Dupont E."/>
            <person name="el Aoumari A."/>
            <person name="Fromaget C."/>
            <person name="Briand J.-C."/>
            <person name="Gros D."/>
        </authorList>
    </citation>
    <scope>PROTEIN SEQUENCE OF 2-16</scope>
    <source>
        <tissue>Brain</tissue>
    </source>
</reference>
<reference key="7">
    <citation type="journal article" date="1989" name="J. Cell Biol.">
        <title>The 43-kD polypeptide of heart gap junctions: immunolocalization, topology, and functional domains.</title>
        <authorList>
            <person name="Yancey S.B."/>
            <person name="John S.A."/>
            <person name="Lal R."/>
            <person name="Austin B.J."/>
            <person name="Revel J.P."/>
        </authorList>
    </citation>
    <scope>SUBCELLULAR LOCATION</scope>
    <scope>TISSUE SPECIFICITY</scope>
    <scope>TOPOLOGY</scope>
</reference>
<reference key="8">
    <citation type="journal article" date="1991" name="Biochem. Biophys. Res. Commun.">
        <title>Connexon integrity is maintained by non-covalent bonds: intramolecular disulfide bonds link the extracellular domains in rat connexin-43.</title>
        <authorList>
            <person name="John S.A."/>
            <person name="Revel J.-P."/>
        </authorList>
    </citation>
    <scope>DISULFIDE BONDS</scope>
</reference>
<reference key="9">
    <citation type="journal article" date="2002" name="FEBS Lett.">
        <title>Identification and functional analysis of novel phosphorylation sites in Cx43 in rat primary granulosa cells.</title>
        <authorList>
            <person name="Yogo K."/>
            <person name="Ogawa T."/>
            <person name="Akiyama M."/>
            <person name="Ishida N."/>
            <person name="Takeya T."/>
        </authorList>
    </citation>
    <scope>PHOSPHORYLATION AT SER-365; SER-368; SER-369 AND SER-373</scope>
</reference>
<reference key="10">
    <citation type="journal article" date="2004" name="J. Biol. Chem.">
        <title>Connexin43 interacts with NOV: a possible mechanism for negative regulation of cell growth in choriocarcinoma cells.</title>
        <authorList>
            <person name="Gellhaus A."/>
            <person name="Dong X."/>
            <person name="Propson S."/>
            <person name="Maass K."/>
            <person name="Klein-Hitpass L."/>
            <person name="Kibschull M."/>
            <person name="Traub O."/>
            <person name="Willecke K."/>
            <person name="Perbal B."/>
            <person name="Lye S.J."/>
            <person name="Winterhager E."/>
        </authorList>
    </citation>
    <scope>FUNCTION</scope>
    <scope>SUBCELLULAR LOCATION</scope>
    <scope>INTERACTION WITH NOV</scope>
</reference>
<reference key="11">
    <citation type="journal article" date="2004" name="J. Biol. Chem.">
        <title>CCN3 (NOV) interacts with connexin43 in C6 glioma cells: possible mechanism of connexin-mediated growth suppression.</title>
        <authorList>
            <person name="Fu C.T."/>
            <person name="Bechberger J.F."/>
            <person name="Ozog M.A."/>
            <person name="Perbal B."/>
            <person name="Naus C.C."/>
        </authorList>
    </citation>
    <scope>SUBCELLULAR LOCATION</scope>
    <scope>INTERACTION WITH NOV</scope>
</reference>
<reference key="12">
    <citation type="journal article" date="2010" name="J. Biomol. NMR">
        <title>NMR structure note: UBA domain of CIP75.</title>
        <authorList>
            <person name="Kieken F."/>
            <person name="Spagnol G."/>
            <person name="Su V."/>
            <person name="Lau A.F."/>
            <person name="Sorgen P.L."/>
        </authorList>
    </citation>
    <scope>INTERACTION WITH UBQLN4</scope>
</reference>
<reference key="13">
    <citation type="journal article" date="2011" name="Circ. Res.">
        <title>Interactions between ankyrin-G, Plakophilin-2, and Connexin43 at the cardiac intercalated disc.</title>
        <authorList>
            <person name="Sato P.Y."/>
            <person name="Coombs W."/>
            <person name="Lin X."/>
            <person name="Nekrasova O."/>
            <person name="Green K.J."/>
            <person name="Isom L.L."/>
            <person name="Taffet S.M."/>
            <person name="Delmar M."/>
        </authorList>
    </citation>
    <scope>INTERACTION WITH ANK3 AND PKP2</scope>
    <scope>TISSUE SPECIFICITY</scope>
</reference>
<reference key="14">
    <citation type="journal article" date="2012" name="Nat. Commun.">
        <title>Involvement of urinary bladder Connexin43 and the circadian clock in coordination of diurnal micturition rhythm.</title>
        <authorList>
            <person name="Negoro H."/>
            <person name="Kanematsu A."/>
            <person name="Doi M."/>
            <person name="Suadicani S.O."/>
            <person name="Matsuo M."/>
            <person name="Imamura M."/>
            <person name="Okinami T."/>
            <person name="Nishikawa N."/>
            <person name="Oura T."/>
            <person name="Matsui S."/>
            <person name="Seo K."/>
            <person name="Tainaka M."/>
            <person name="Urabe S."/>
            <person name="Kiyokage E."/>
            <person name="Todo T."/>
            <person name="Okamura H."/>
            <person name="Tabata Y."/>
            <person name="Ogawa O."/>
        </authorList>
    </citation>
    <scope>INDUCTION</scope>
</reference>
<reference key="15">
    <citation type="journal article" date="2012" name="Nat. Commun.">
        <title>Quantitative maps of protein phosphorylation sites across 14 different rat organs and tissues.</title>
        <authorList>
            <person name="Lundby A."/>
            <person name="Secher A."/>
            <person name="Lage K."/>
            <person name="Nordsborg N.B."/>
            <person name="Dmytriyev A."/>
            <person name="Lundby C."/>
            <person name="Olsen J.V."/>
        </authorList>
    </citation>
    <scope>PHOSPHORYLATION [LARGE SCALE ANALYSIS] AT SER-5; SER-257; SER-306; SER-314; SER-325; THR-326; SER-328 AND SER-330</scope>
    <scope>IDENTIFICATION BY MASS SPECTROMETRY [LARGE SCALE ANALYSIS]</scope>
</reference>
<reference key="16">
    <citation type="journal article" date="2014" name="J. Biol. Chem.">
        <title>Protein kinase Cdelta-mediated phosphorylation of Connexin43 gap junction channels causes movement within gap junctions followed by vesicle internalization and protein degradation.</title>
        <authorList>
            <person name="Cone A.C."/>
            <person name="Cavin G."/>
            <person name="Ambrosi C."/>
            <person name="Hakozaki H."/>
            <person name="Wu-Zhang A.X."/>
            <person name="Kunkel M.T."/>
            <person name="Newton A.C."/>
            <person name="Sosinsky G.E."/>
        </authorList>
    </citation>
    <scope>PHOSPHORYLATION AT SER-368</scope>
    <scope>MUTAGENESIS OF SER-368</scope>
</reference>
<reference key="17">
    <citation type="journal article" date="1992" name="J. Mol. Biol.">
        <title>Membrane topology and quaternary structure of cardiac gap junction ion channels.</title>
        <authorList>
            <person name="Yeager M."/>
            <person name="Gilula N.B."/>
        </authorList>
    </citation>
    <scope>STRUCTURE BY ELECTRON MICROSCOPY (17.0 ANGSTROMS)</scope>
    <scope>SUBUNIT</scope>
    <scope>TOPOLOGY</scope>
</reference>
<reference key="18">
    <citation type="journal article" date="2004" name="J. Biol. Chem.">
        <title>Structural changes in the carboxyl terminus of the gap junction protein connexin43 indicates signaling between binding domains for c-Src and zonula occludens-1.</title>
        <authorList>
            <person name="Sorgen P.L."/>
            <person name="Duffy H.S."/>
            <person name="Sahoo P."/>
            <person name="Coombs W."/>
            <person name="Delmar M."/>
            <person name="Spray D.C."/>
        </authorList>
    </citation>
    <scope>STRUCTURE BY NMR OF 255-381</scope>
    <scope>INTERACTION WITH TJP1 AND SRC</scope>
</reference>
<reference key="19">
    <citation type="journal article" date="2008" name="EMBO J.">
        <title>Domain-swapped dimerization of ZO-1 PDZ2 generates specific and regulatory connexin43-binding sites.</title>
        <authorList>
            <person name="Chen J."/>
            <person name="Pan L."/>
            <person name="Wei Z."/>
            <person name="Zhao Y."/>
            <person name="Zhang M."/>
        </authorList>
    </citation>
    <scope>X-RAY CRYSTALLOGRAPHY (2.4 ANGSTROMS) OF 374-382 IN COMPLEX WITH TJP1</scope>
    <scope>SUBCELLULAR LOCATION</scope>
    <scope>INTERACTION WITH TJP1</scope>
</reference>
<gene>
    <name type="primary">Gja1</name>
    <name type="synonym">Cxn-43</name>
</gene>
<feature type="initiator methionine" description="Removed" evidence="11 18">
    <location>
        <position position="1"/>
    </location>
</feature>
<feature type="chain" id="PRO_0000057804" description="Gap junction alpha-1 protein">
    <location>
        <begin position="2"/>
        <end position="382"/>
    </location>
</feature>
<feature type="topological domain" description="Cytoplasmic" evidence="21 22">
    <location>
        <begin position="2"/>
        <end position="23"/>
    </location>
</feature>
<feature type="transmembrane region" description="Helical" evidence="4">
    <location>
        <begin position="24"/>
        <end position="44"/>
    </location>
</feature>
<feature type="topological domain" description="Extracellular" evidence="21 22">
    <location>
        <begin position="45"/>
        <end position="76"/>
    </location>
</feature>
<feature type="transmembrane region" description="Helical" evidence="4">
    <location>
        <begin position="77"/>
        <end position="97"/>
    </location>
</feature>
<feature type="topological domain" description="Cytoplasmic" evidence="21 22">
    <location>
        <begin position="98"/>
        <end position="155"/>
    </location>
</feature>
<feature type="transmembrane region" description="Helical" evidence="4">
    <location>
        <begin position="156"/>
        <end position="176"/>
    </location>
</feature>
<feature type="topological domain" description="Extracellular" evidence="21 22">
    <location>
        <begin position="177"/>
        <end position="207"/>
    </location>
</feature>
<feature type="transmembrane region" description="Helical" evidence="4">
    <location>
        <begin position="208"/>
        <end position="228"/>
    </location>
</feature>
<feature type="topological domain" description="Cytoplasmic" evidence="21 22">
    <location>
        <begin position="229"/>
        <end position="382"/>
    </location>
</feature>
<feature type="region of interest" description="Interaction with NOV" evidence="8 9">
    <location>
        <begin position="244"/>
        <end position="382"/>
    </location>
</feature>
<feature type="region of interest" description="Interaction with UBQLN4" evidence="2">
    <location>
        <begin position="264"/>
        <end position="382"/>
    </location>
</feature>
<feature type="region of interest" description="Disordered" evidence="5">
    <location>
        <begin position="317"/>
        <end position="382"/>
    </location>
</feature>
<feature type="compositionally biased region" description="Polar residues" evidence="5">
    <location>
        <begin position="317"/>
        <end position="332"/>
    </location>
</feature>
<feature type="compositionally biased region" description="Low complexity" evidence="5">
    <location>
        <begin position="362"/>
        <end position="374"/>
    </location>
</feature>
<feature type="modified residue" description="Phosphoserine" evidence="23">
    <location>
        <position position="5"/>
    </location>
</feature>
<feature type="modified residue" description="Phosphotyrosine" evidence="2">
    <location>
        <position position="247"/>
    </location>
</feature>
<feature type="modified residue" description="Phosphoserine" evidence="1">
    <location>
        <position position="255"/>
    </location>
</feature>
<feature type="modified residue" description="Phosphoserine" evidence="23">
    <location>
        <position position="257"/>
    </location>
</feature>
<feature type="modified residue" description="Phosphoserine" evidence="1">
    <location>
        <position position="262"/>
    </location>
</feature>
<feature type="modified residue" description="S-nitrosocysteine" evidence="2">
    <location>
        <position position="271"/>
    </location>
</feature>
<feature type="modified residue" description="Phosphothreonine" evidence="2">
    <location>
        <position position="275"/>
    </location>
</feature>
<feature type="modified residue" description="Phosphoserine" evidence="23">
    <location>
        <position position="306"/>
    </location>
</feature>
<feature type="modified residue" description="Phosphoserine" evidence="23">
    <location>
        <position position="314"/>
    </location>
</feature>
<feature type="modified residue" description="Phosphoserine" evidence="23">
    <location>
        <position position="325"/>
    </location>
</feature>
<feature type="modified residue" description="Phosphothreonine" evidence="23">
    <location>
        <position position="326"/>
    </location>
</feature>
<feature type="modified residue" description="Phosphoserine" evidence="23">
    <location>
        <position position="328"/>
    </location>
</feature>
<feature type="modified residue" description="Phosphoserine" evidence="23">
    <location>
        <position position="330"/>
    </location>
</feature>
<feature type="modified residue" description="Phosphoserine" evidence="6">
    <location>
        <position position="365"/>
    </location>
</feature>
<feature type="modified residue" description="Phosphoserine; by PKC/PRKCG and PKC/PRKCD" evidence="16 20">
    <location>
        <position position="368"/>
    </location>
</feature>
<feature type="modified residue" description="Phosphoserine" evidence="6">
    <location>
        <position position="369"/>
    </location>
</feature>
<feature type="modified residue" description="Phosphoserine" evidence="6">
    <location>
        <position position="373"/>
    </location>
</feature>
<feature type="disulfide bond" evidence="1">
    <location>
        <begin position="54"/>
        <end position="192"/>
    </location>
</feature>
<feature type="disulfide bond" evidence="1">
    <location>
        <begin position="187"/>
        <end position="198"/>
    </location>
</feature>
<feature type="cross-link" description="Glycyl lysine isopeptide (Lys-Gly) (interchain with G-Cter in SUMO)" evidence="1">
    <location>
        <position position="144"/>
    </location>
</feature>
<feature type="cross-link" description="Glycyl lysine isopeptide (Lys-Gly) (interchain with G-Cter in SUMO)" evidence="1">
    <location>
        <position position="237"/>
    </location>
</feature>
<feature type="mutagenesis site" description="Loss of phosphorylation by PKC/PRKCD." evidence="16">
    <original>S</original>
    <variation>A</variation>
    <location>
        <position position="368"/>
    </location>
</feature>
<feature type="sequence conflict" description="In Ref. 5; AA sequence." evidence="19" ref="5">
    <original>G</original>
    <variation>A</variation>
    <location>
        <position position="2"/>
    </location>
</feature>
<feature type="sequence conflict" description="In Ref. 2; no nucleotide entry." evidence="19" ref="2">
    <original>A</original>
    <variation>T</variation>
    <location>
        <position position="16"/>
    </location>
</feature>
<feature type="sequence conflict" description="In Ref. 5; AA sequence." evidence="19" ref="5">
    <original>V</original>
    <variation>I</variation>
    <location>
        <position position="28"/>
    </location>
</feature>
<feature type="turn" evidence="24">
    <location>
        <begin position="256"/>
        <end position="259"/>
    </location>
</feature>
<feature type="strand" evidence="24">
    <location>
        <begin position="263"/>
        <end position="265"/>
    </location>
</feature>
<feature type="strand" evidence="25">
    <location>
        <begin position="283"/>
        <end position="285"/>
    </location>
</feature>
<feature type="strand" evidence="24">
    <location>
        <begin position="297"/>
        <end position="300"/>
    </location>
</feature>
<feature type="helix" evidence="24">
    <location>
        <begin position="317"/>
        <end position="325"/>
    </location>
</feature>
<feature type="helix" evidence="24">
    <location>
        <begin position="342"/>
        <end position="348"/>
    </location>
</feature>
<feature type="turn" evidence="24">
    <location>
        <begin position="349"/>
        <end position="352"/>
    </location>
</feature>
<feature type="strand" evidence="24">
    <location>
        <begin position="360"/>
        <end position="362"/>
    </location>
</feature>
<feature type="turn" evidence="24">
    <location>
        <begin position="366"/>
        <end position="370"/>
    </location>
</feature>
<feature type="strand" evidence="26">
    <location>
        <begin position="379"/>
        <end position="381"/>
    </location>
</feature>
<organism>
    <name type="scientific">Rattus norvegicus</name>
    <name type="common">Rat</name>
    <dbReference type="NCBI Taxonomy" id="10116"/>
    <lineage>
        <taxon>Eukaryota</taxon>
        <taxon>Metazoa</taxon>
        <taxon>Chordata</taxon>
        <taxon>Craniata</taxon>
        <taxon>Vertebrata</taxon>
        <taxon>Euteleostomi</taxon>
        <taxon>Mammalia</taxon>
        <taxon>Eutheria</taxon>
        <taxon>Euarchontoglires</taxon>
        <taxon>Glires</taxon>
        <taxon>Rodentia</taxon>
        <taxon>Myomorpha</taxon>
        <taxon>Muroidea</taxon>
        <taxon>Muridae</taxon>
        <taxon>Murinae</taxon>
        <taxon>Rattus</taxon>
    </lineage>
</organism>
<proteinExistence type="evidence at protein level"/>
<keyword id="KW-0002">3D-structure</keyword>
<keyword id="KW-0007">Acetylation</keyword>
<keyword id="KW-0965">Cell junction</keyword>
<keyword id="KW-1003">Cell membrane</keyword>
<keyword id="KW-0903">Direct protein sequencing</keyword>
<keyword id="KW-1015">Disulfide bond</keyword>
<keyword id="KW-0256">Endoplasmic reticulum</keyword>
<keyword id="KW-0303">Gap junction</keyword>
<keyword id="KW-1017">Isopeptide bond</keyword>
<keyword id="KW-0472">Membrane</keyword>
<keyword id="KW-0597">Phosphoprotein</keyword>
<keyword id="KW-1185">Reference proteome</keyword>
<keyword id="KW-0702">S-nitrosylation</keyword>
<keyword id="KW-0812">Transmembrane</keyword>
<keyword id="KW-1133">Transmembrane helix</keyword>
<keyword id="KW-0832">Ubl conjugation</keyword>
<comment type="function">
    <text evidence="2 8">Gap junction protein that acts as a regulator of bladder capacity. A gap junction consists of a cluster of closely packed pairs of transmembrane channels, the connexons, through which materials of low MW diffuse from one cell to a neighboring cell. Negative regulator of bladder functional capacity: acts by enhancing intercellular electrical and chemical transmission, thus sensitizing bladder muscles to cholinergic neural stimuli and causing them to contract (By similarity). May play a role in cell growth inhibition through the regulation of NOV expression and localization (PubMed:15181016). Plays an essential role in gap junction communication in the ventricles (By similarity).</text>
</comment>
<comment type="subunit">
    <text evidence="1 2 7 8 9 10 12 13 14">A connexon is composed of a hexamer of connexins (PubMed:1371548). Interacts with SGSM3 (By similarity). Interacts with RIC1/CIP150 (By similarity). Interacts with CNST and CSNK1D (By similarity). Interacts (via C-terminus) with TJP1 (PubMed:15492000, PubMed:18636092). Interacts (via C-terminus) with SRC (via SH3 domain) (PubMed:15492000). Interacts (not ubiquitinated) with UBQLN4 (via UBA domain) (PubMed:20127391). Interacts with NOV (PubMed:15181016, PubMed:15213231). Interacts with TMEM65 (By similarity). Interacts with ANK3/ANKG and PKP2 (PubMed:21617128).</text>
</comment>
<comment type="interaction">
    <interactant intactId="EBI-476947">
        <id>P08050</id>
    </interactant>
    <interactant intactId="EBI-6991142">
        <id>Q63664</id>
        <label>Kcnj8</label>
    </interactant>
    <organismsDiffer>false</organismsDiffer>
    <experiments>4</experiments>
</comment>
<comment type="interaction">
    <interactant intactId="EBI-476947">
        <id>P08050</id>
    </interactant>
    <interactant intactId="EBI-525155">
        <id>Q8VCZ6</id>
        <label>Sgsm3</label>
    </interactant>
    <organismsDiffer>true</organismsDiffer>
    <experiments>4</experiments>
</comment>
<comment type="interaction">
    <interactant intactId="EBI-476947">
        <id>P08050</id>
    </interactant>
    <interactant intactId="EBI-711226">
        <id>Q9NRR5</id>
        <label>UBQLN4</label>
    </interactant>
    <organismsDiffer>true</organismsDiffer>
    <experiments>2</experiments>
</comment>
<comment type="subcellular location">
    <subcellularLocation>
        <location evidence="12">Cell membrane</location>
        <topology evidence="4">Multi-pass membrane protein</topology>
    </subcellularLocation>
    <subcellularLocation>
        <location evidence="9 12 17">Cell junction</location>
        <location evidence="9 12 17">Gap junction</location>
    </subcellularLocation>
    <subcellularLocation>
        <location evidence="2">Endoplasmic reticulum</location>
    </subcellularLocation>
    <text evidence="2">Localizes at the intercalated disk (ICD) in cardiomyocytes and the proper localization at ICD is dependent on TMEM65.</text>
</comment>
<comment type="tissue specificity">
    <text evidence="14 17">Detected in ventricle and atrium (at protein level).</text>
</comment>
<comment type="induction">
    <text evidence="15">In bladder smooth muscle cells, exhibits night/day variations with low levels during the sleep phase, at circadian time (CT) 4-8 (at protein level). Expression starts to increase around CT12 and forms a plateau during the active phase (CT16-24) (at protein level).</text>
</comment>
<comment type="PTM">
    <text>Contains at least one intramolecular disulfide bond.</text>
</comment>
<comment type="PTM">
    <text evidence="1 3 16">Phosphorylation at Ser-325, Ser-328 and Ser-330 by CK1 modulates gap junction assembly. Phosphorylated at Ser-368 by PRKCG; phosphorylation induces disassembly of gap junction plaques and inhibition of gap junction activity (By similarity). Phosphorylation at Ser-368 by PRKCD triggers its internalization into small vesicles leading to proteasome-mediated degradation (PubMed:24500718).</text>
</comment>
<comment type="PTM">
    <text evidence="1">Sumoylated with SUMO1, SUMO2 and SUMO3, which may regulate the level of functional Cx43 gap junctions at the plasma membrane. May be desumoylated by SENP1 or SENP2 (By similarity).</text>
</comment>
<comment type="PTM">
    <text evidence="2">S-nitrosylation at Cys-271 is enriched at the muscle endothelial gap junction in arteries, it augments channel permeability and may regulate of smooth muscle cell to endothelial cell communication.</text>
</comment>
<comment type="PTM">
    <text evidence="2">Acetylated in the developing cortex; leading to delocalization from the cell membrane.</text>
</comment>
<comment type="similarity">
    <text evidence="19">Belongs to the connexin family. Alpha-type (group II) subfamily.</text>
</comment>
<name>CXA1_RAT</name>
<sequence>MGDWSALGKLLDKVQAYSTAGGKVWLSVLFIFRILLLGTAVESAWGDEQSAFRCNTQQPGCENVCYDKSFPISHVRFWVLQIIFVSVPTLLYLAHVFYVMRKEEKLNKKEEELKVAQTDGVNVEMHLKQIEIKKFKYGIEEHGKVKMRGGLLRTYIISILFKSVFEVAFLLIQWYIYGFSLSAVYTCKRDPCPHQVDCFLSRPTEKTIFIIFMLVVSLVSLALNIIELFYVFFKGVKDRVKGRSDPYHATTGPLSPSKDCGSPKYAYFNGCSSPTAPLSPMSPPGYKLVTGDRNNSSCRNYNKQASEQNWANYSAEQNRMGQAGSTISNSHAQPFDFPDDNQNAKKVAAGHELQPLAIVDQRPSSRASSRASSRPRPDDLEI</sequence>